<name>LUC7L_MOUSE</name>
<protein>
    <recommendedName>
        <fullName>Putative RNA-binding protein Luc7-like 1</fullName>
    </recommendedName>
</protein>
<sequence>MSAQAQMRALLDQLMGTARDGDETRQRVKFTDDRVCKSHLLDCCPHDILAGTRMDLGECTKIHDLALRADYEIASKERDLFFELDAMDHLESFIAECDRRTELAKKRLAETQEEISAEVSAKAEKVHELNEEIGKLLAKAEQLGAEGNVDESQKILMEVEKVRAKKKEAEEEYRNSMPASSFQQQKLRVCEVCSAYLGLHDNDRRLADHFGGKLHLGFIQIREKLDQLRKTVAEKQEKRNQDRLRRREEREREERLGRRSGSRTRDRRRSRSRDRRRRRSRSTSRERRKFSRSRSRDRYRRHRSRSRSHSRGHRRASRDRSTKYKFSRERSLREESWEYGRNERGPTDWRLENSNGKTASRRSEEKEAGEI</sequence>
<accession>Q9CYI4</accession>
<accession>Q8K247</accession>
<accession>Q9CWM1</accession>
<gene>
    <name type="primary">Luc7l</name>
</gene>
<evidence type="ECO:0000250" key="1">
    <source>
        <dbReference type="UniProtKB" id="Q9NQ29"/>
    </source>
</evidence>
<evidence type="ECO:0000255" key="2"/>
<evidence type="ECO:0000256" key="3">
    <source>
        <dbReference type="SAM" id="MobiDB-lite"/>
    </source>
</evidence>
<evidence type="ECO:0000303" key="4">
    <source>
    </source>
</evidence>
<evidence type="ECO:0000305" key="5"/>
<comment type="function">
    <text>May bind to RNA via its Arg/Ser-rich domain.</text>
</comment>
<comment type="alternative products">
    <event type="alternative splicing"/>
    <isoform>
        <id>Q9CYI4-1</id>
        <name>1</name>
        <sequence type="displayed"/>
    </isoform>
    <isoform>
        <id>Q9CYI4-2</id>
        <name>2</name>
        <sequence type="described" ref="VSP_010216"/>
    </isoform>
</comment>
<comment type="similarity">
    <text evidence="5">Belongs to the Luc7 family.</text>
</comment>
<proteinExistence type="evidence at protein level"/>
<reference key="1">
    <citation type="journal article" date="2005" name="Science">
        <title>The transcriptional landscape of the mammalian genome.</title>
        <authorList>
            <person name="Carninci P."/>
            <person name="Kasukawa T."/>
            <person name="Katayama S."/>
            <person name="Gough J."/>
            <person name="Frith M.C."/>
            <person name="Maeda N."/>
            <person name="Oyama R."/>
            <person name="Ravasi T."/>
            <person name="Lenhard B."/>
            <person name="Wells C."/>
            <person name="Kodzius R."/>
            <person name="Shimokawa K."/>
            <person name="Bajic V.B."/>
            <person name="Brenner S.E."/>
            <person name="Batalov S."/>
            <person name="Forrest A.R."/>
            <person name="Zavolan M."/>
            <person name="Davis M.J."/>
            <person name="Wilming L.G."/>
            <person name="Aidinis V."/>
            <person name="Allen J.E."/>
            <person name="Ambesi-Impiombato A."/>
            <person name="Apweiler R."/>
            <person name="Aturaliya R.N."/>
            <person name="Bailey T.L."/>
            <person name="Bansal M."/>
            <person name="Baxter L."/>
            <person name="Beisel K.W."/>
            <person name="Bersano T."/>
            <person name="Bono H."/>
            <person name="Chalk A.M."/>
            <person name="Chiu K.P."/>
            <person name="Choudhary V."/>
            <person name="Christoffels A."/>
            <person name="Clutterbuck D.R."/>
            <person name="Crowe M.L."/>
            <person name="Dalla E."/>
            <person name="Dalrymple B.P."/>
            <person name="de Bono B."/>
            <person name="Della Gatta G."/>
            <person name="di Bernardo D."/>
            <person name="Down T."/>
            <person name="Engstrom P."/>
            <person name="Fagiolini M."/>
            <person name="Faulkner G."/>
            <person name="Fletcher C.F."/>
            <person name="Fukushima T."/>
            <person name="Furuno M."/>
            <person name="Futaki S."/>
            <person name="Gariboldi M."/>
            <person name="Georgii-Hemming P."/>
            <person name="Gingeras T.R."/>
            <person name="Gojobori T."/>
            <person name="Green R.E."/>
            <person name="Gustincich S."/>
            <person name="Harbers M."/>
            <person name="Hayashi Y."/>
            <person name="Hensch T.K."/>
            <person name="Hirokawa N."/>
            <person name="Hill D."/>
            <person name="Huminiecki L."/>
            <person name="Iacono M."/>
            <person name="Ikeo K."/>
            <person name="Iwama A."/>
            <person name="Ishikawa T."/>
            <person name="Jakt M."/>
            <person name="Kanapin A."/>
            <person name="Katoh M."/>
            <person name="Kawasawa Y."/>
            <person name="Kelso J."/>
            <person name="Kitamura H."/>
            <person name="Kitano H."/>
            <person name="Kollias G."/>
            <person name="Krishnan S.P."/>
            <person name="Kruger A."/>
            <person name="Kummerfeld S.K."/>
            <person name="Kurochkin I.V."/>
            <person name="Lareau L.F."/>
            <person name="Lazarevic D."/>
            <person name="Lipovich L."/>
            <person name="Liu J."/>
            <person name="Liuni S."/>
            <person name="McWilliam S."/>
            <person name="Madan Babu M."/>
            <person name="Madera M."/>
            <person name="Marchionni L."/>
            <person name="Matsuda H."/>
            <person name="Matsuzawa S."/>
            <person name="Miki H."/>
            <person name="Mignone F."/>
            <person name="Miyake S."/>
            <person name="Morris K."/>
            <person name="Mottagui-Tabar S."/>
            <person name="Mulder N."/>
            <person name="Nakano N."/>
            <person name="Nakauchi H."/>
            <person name="Ng P."/>
            <person name="Nilsson R."/>
            <person name="Nishiguchi S."/>
            <person name="Nishikawa S."/>
            <person name="Nori F."/>
            <person name="Ohara O."/>
            <person name="Okazaki Y."/>
            <person name="Orlando V."/>
            <person name="Pang K.C."/>
            <person name="Pavan W.J."/>
            <person name="Pavesi G."/>
            <person name="Pesole G."/>
            <person name="Petrovsky N."/>
            <person name="Piazza S."/>
            <person name="Reed J."/>
            <person name="Reid J.F."/>
            <person name="Ring B.Z."/>
            <person name="Ringwald M."/>
            <person name="Rost B."/>
            <person name="Ruan Y."/>
            <person name="Salzberg S.L."/>
            <person name="Sandelin A."/>
            <person name="Schneider C."/>
            <person name="Schoenbach C."/>
            <person name="Sekiguchi K."/>
            <person name="Semple C.A."/>
            <person name="Seno S."/>
            <person name="Sessa L."/>
            <person name="Sheng Y."/>
            <person name="Shibata Y."/>
            <person name="Shimada H."/>
            <person name="Shimada K."/>
            <person name="Silva D."/>
            <person name="Sinclair B."/>
            <person name="Sperling S."/>
            <person name="Stupka E."/>
            <person name="Sugiura K."/>
            <person name="Sultana R."/>
            <person name="Takenaka Y."/>
            <person name="Taki K."/>
            <person name="Tammoja K."/>
            <person name="Tan S.L."/>
            <person name="Tang S."/>
            <person name="Taylor M.S."/>
            <person name="Tegner J."/>
            <person name="Teichmann S.A."/>
            <person name="Ueda H.R."/>
            <person name="van Nimwegen E."/>
            <person name="Verardo R."/>
            <person name="Wei C.L."/>
            <person name="Yagi K."/>
            <person name="Yamanishi H."/>
            <person name="Zabarovsky E."/>
            <person name="Zhu S."/>
            <person name="Zimmer A."/>
            <person name="Hide W."/>
            <person name="Bult C."/>
            <person name="Grimmond S.M."/>
            <person name="Teasdale R.D."/>
            <person name="Liu E.T."/>
            <person name="Brusic V."/>
            <person name="Quackenbush J."/>
            <person name="Wahlestedt C."/>
            <person name="Mattick J.S."/>
            <person name="Hume D.A."/>
            <person name="Kai C."/>
            <person name="Sasaki D."/>
            <person name="Tomaru Y."/>
            <person name="Fukuda S."/>
            <person name="Kanamori-Katayama M."/>
            <person name="Suzuki M."/>
            <person name="Aoki J."/>
            <person name="Arakawa T."/>
            <person name="Iida J."/>
            <person name="Imamura K."/>
            <person name="Itoh M."/>
            <person name="Kato T."/>
            <person name="Kawaji H."/>
            <person name="Kawagashira N."/>
            <person name="Kawashima T."/>
            <person name="Kojima M."/>
            <person name="Kondo S."/>
            <person name="Konno H."/>
            <person name="Nakano K."/>
            <person name="Ninomiya N."/>
            <person name="Nishio T."/>
            <person name="Okada M."/>
            <person name="Plessy C."/>
            <person name="Shibata K."/>
            <person name="Shiraki T."/>
            <person name="Suzuki S."/>
            <person name="Tagami M."/>
            <person name="Waki K."/>
            <person name="Watahiki A."/>
            <person name="Okamura-Oho Y."/>
            <person name="Suzuki H."/>
            <person name="Kawai J."/>
            <person name="Hayashizaki Y."/>
        </authorList>
    </citation>
    <scope>NUCLEOTIDE SEQUENCE [LARGE SCALE MRNA] (ISOFORM 1)</scope>
    <source>
        <strain>C57BL/6J</strain>
        <tissue>Embryo</tissue>
        <tissue>Embryonic stem cell</tissue>
    </source>
</reference>
<reference key="2">
    <citation type="journal article" date="2004" name="Genome Res.">
        <title>The status, quality, and expansion of the NIH full-length cDNA project: the Mammalian Gene Collection (MGC).</title>
        <authorList>
            <consortium name="The MGC Project Team"/>
        </authorList>
    </citation>
    <scope>NUCLEOTIDE SEQUENCE [LARGE SCALE MRNA] (ISOFORM 2)</scope>
    <source>
        <tissue>Mammary tumor</tissue>
    </source>
</reference>
<reference key="3">
    <citation type="journal article" date="2010" name="Cell">
        <title>A tissue-specific atlas of mouse protein phosphorylation and expression.</title>
        <authorList>
            <person name="Huttlin E.L."/>
            <person name="Jedrychowski M.P."/>
            <person name="Elias J.E."/>
            <person name="Goswami T."/>
            <person name="Rad R."/>
            <person name="Beausoleil S.A."/>
            <person name="Villen J."/>
            <person name="Haas W."/>
            <person name="Sowa M.E."/>
            <person name="Gygi S.P."/>
        </authorList>
    </citation>
    <scope>IDENTIFICATION BY MASS SPECTROMETRY [LARGE SCALE ANALYSIS]</scope>
    <source>
        <tissue>Kidney</tissue>
        <tissue>Lung</tissue>
        <tissue>Pancreas</tissue>
        <tissue>Spleen</tissue>
        <tissue>Testis</tissue>
    </source>
</reference>
<organism>
    <name type="scientific">Mus musculus</name>
    <name type="common">Mouse</name>
    <dbReference type="NCBI Taxonomy" id="10090"/>
    <lineage>
        <taxon>Eukaryota</taxon>
        <taxon>Metazoa</taxon>
        <taxon>Chordata</taxon>
        <taxon>Craniata</taxon>
        <taxon>Vertebrata</taxon>
        <taxon>Euteleostomi</taxon>
        <taxon>Mammalia</taxon>
        <taxon>Eutheria</taxon>
        <taxon>Euarchontoglires</taxon>
        <taxon>Glires</taxon>
        <taxon>Rodentia</taxon>
        <taxon>Myomorpha</taxon>
        <taxon>Muroidea</taxon>
        <taxon>Muridae</taxon>
        <taxon>Murinae</taxon>
        <taxon>Mus</taxon>
        <taxon>Mus</taxon>
    </lineage>
</organism>
<keyword id="KW-0025">Alternative splicing</keyword>
<keyword id="KW-0175">Coiled coil</keyword>
<keyword id="KW-0597">Phosphoprotein</keyword>
<keyword id="KW-1185">Reference proteome</keyword>
<feature type="chain" id="PRO_0000187281" description="Putative RNA-binding protein Luc7-like 1">
    <location>
        <begin position="1"/>
        <end position="371"/>
    </location>
</feature>
<feature type="region of interest" description="Disordered" evidence="3">
    <location>
        <begin position="232"/>
        <end position="371"/>
    </location>
</feature>
<feature type="coiled-coil region" evidence="2">
    <location>
        <begin position="87"/>
        <end position="177"/>
    </location>
</feature>
<feature type="coiled-coil region" evidence="2">
    <location>
        <begin position="220"/>
        <end position="256"/>
    </location>
</feature>
<feature type="compositionally biased region" description="Basic and acidic residues" evidence="3">
    <location>
        <begin position="232"/>
        <end position="257"/>
    </location>
</feature>
<feature type="compositionally biased region" description="Basic residues" evidence="3">
    <location>
        <begin position="258"/>
        <end position="317"/>
    </location>
</feature>
<feature type="compositionally biased region" description="Basic and acidic residues" evidence="3">
    <location>
        <begin position="318"/>
        <end position="351"/>
    </location>
</feature>
<feature type="compositionally biased region" description="Basic and acidic residues" evidence="3">
    <location>
        <begin position="361"/>
        <end position="371"/>
    </location>
</feature>
<feature type="modified residue" description="Phosphoserine" evidence="1">
    <location>
        <position position="336"/>
    </location>
</feature>
<feature type="modified residue" description="Phosphoserine" evidence="1">
    <location>
        <position position="363"/>
    </location>
</feature>
<feature type="splice variant" id="VSP_010216" description="In isoform 2." evidence="4">
    <location>
        <begin position="1"/>
        <end position="53"/>
    </location>
</feature>
<feature type="sequence conflict" description="In Ref. 1; BAB30856." evidence="5" ref="1">
    <original>K</original>
    <variation>E</variation>
    <location>
        <position position="213"/>
    </location>
</feature>
<feature type="sequence conflict" description="In Ref. 1; BAB30856." evidence="5" ref="1">
    <original>KLD</original>
    <variation>SLI</variation>
    <location>
        <begin position="224"/>
        <end position="226"/>
    </location>
</feature>
<feature type="sequence conflict" description="In Ref. 1; BAB30856." evidence="5" ref="1">
    <original>K</original>
    <variation>R</variation>
    <location>
        <position position="289"/>
    </location>
</feature>
<dbReference type="EMBL" id="AK010539">
    <property type="protein sequence ID" value="BAB27015.1"/>
    <property type="molecule type" value="mRNA"/>
</dbReference>
<dbReference type="EMBL" id="AK017655">
    <property type="protein sequence ID" value="BAB30856.1"/>
    <property type="molecule type" value="mRNA"/>
</dbReference>
<dbReference type="EMBL" id="BC034135">
    <property type="protein sequence ID" value="AAH34135.1"/>
    <property type="molecule type" value="mRNA"/>
</dbReference>
<dbReference type="CCDS" id="CCDS28549.1">
    <molecule id="Q9CYI4-1"/>
</dbReference>
<dbReference type="RefSeq" id="NP_080157.1">
    <property type="nucleotide sequence ID" value="NM_025881.3"/>
</dbReference>
<dbReference type="RefSeq" id="NP_082466.2">
    <molecule id="Q9CYI4-1"/>
    <property type="nucleotide sequence ID" value="NM_028190.3"/>
</dbReference>
<dbReference type="RefSeq" id="XP_017173104.1">
    <molecule id="Q9CYI4-2"/>
    <property type="nucleotide sequence ID" value="XM_017317615.2"/>
</dbReference>
<dbReference type="SMR" id="Q9CYI4"/>
<dbReference type="BioGRID" id="211851">
    <property type="interactions" value="7"/>
</dbReference>
<dbReference type="FunCoup" id="Q9CYI4">
    <property type="interactions" value="2200"/>
</dbReference>
<dbReference type="STRING" id="10090.ENSMUSP00000110627"/>
<dbReference type="GlyGen" id="Q9CYI4">
    <property type="glycosylation" value="1 site, 1 O-linked glycan (1 site)"/>
</dbReference>
<dbReference type="iPTMnet" id="Q9CYI4"/>
<dbReference type="PhosphoSitePlus" id="Q9CYI4"/>
<dbReference type="SwissPalm" id="Q9CYI4"/>
<dbReference type="jPOST" id="Q9CYI4"/>
<dbReference type="PaxDb" id="10090-ENSMUSP00000110627"/>
<dbReference type="PeptideAtlas" id="Q9CYI4"/>
<dbReference type="ProteomicsDB" id="292130">
    <molecule id="Q9CYI4-1"/>
</dbReference>
<dbReference type="ProteomicsDB" id="292131">
    <molecule id="Q9CYI4-2"/>
</dbReference>
<dbReference type="Pumba" id="Q9CYI4"/>
<dbReference type="Antibodypedia" id="22529">
    <property type="antibodies" value="206 antibodies from 23 providers"/>
</dbReference>
<dbReference type="DNASU" id="66978"/>
<dbReference type="Ensembl" id="ENSMUST00000114976.9">
    <molecule id="Q9CYI4-1"/>
    <property type="protein sequence ID" value="ENSMUSP00000110627.3"/>
    <property type="gene ID" value="ENSMUSG00000024188.17"/>
</dbReference>
<dbReference type="GeneID" id="66978"/>
<dbReference type="KEGG" id="mmu:66978"/>
<dbReference type="UCSC" id="uc008bdy.2">
    <molecule id="Q9CYI4-1"/>
    <property type="organism name" value="mouse"/>
</dbReference>
<dbReference type="AGR" id="MGI:1914228"/>
<dbReference type="CTD" id="55692"/>
<dbReference type="MGI" id="MGI:1914228">
    <property type="gene designation" value="Luc7l"/>
</dbReference>
<dbReference type="VEuPathDB" id="HostDB:ENSMUSG00000024188"/>
<dbReference type="eggNOG" id="KOG0796">
    <property type="taxonomic scope" value="Eukaryota"/>
</dbReference>
<dbReference type="GeneTree" id="ENSGT00950000183213"/>
<dbReference type="InParanoid" id="Q9CYI4"/>
<dbReference type="OMA" id="CPYDLFQ"/>
<dbReference type="OrthoDB" id="153872at2759"/>
<dbReference type="PhylomeDB" id="Q9CYI4"/>
<dbReference type="TreeFam" id="TF317607"/>
<dbReference type="BioGRID-ORCS" id="66978">
    <property type="hits" value="5 hits in 79 CRISPR screens"/>
</dbReference>
<dbReference type="ChiTaRS" id="Luc7l">
    <property type="organism name" value="mouse"/>
</dbReference>
<dbReference type="PRO" id="PR:Q9CYI4"/>
<dbReference type="Proteomes" id="UP000000589">
    <property type="component" value="Chromosome 17"/>
</dbReference>
<dbReference type="RNAct" id="Q9CYI4">
    <property type="molecule type" value="protein"/>
</dbReference>
<dbReference type="Bgee" id="ENSMUSG00000024188">
    <property type="expression patterns" value="Expressed in retinal neural layer and 258 other cell types or tissues"/>
</dbReference>
<dbReference type="ExpressionAtlas" id="Q9CYI4">
    <property type="expression patterns" value="baseline and differential"/>
</dbReference>
<dbReference type="GO" id="GO:0005634">
    <property type="term" value="C:nucleus"/>
    <property type="evidence" value="ECO:0000314"/>
    <property type="project" value="MGI"/>
</dbReference>
<dbReference type="GO" id="GO:0005685">
    <property type="term" value="C:U1 snRNP"/>
    <property type="evidence" value="ECO:0007669"/>
    <property type="project" value="InterPro"/>
</dbReference>
<dbReference type="GO" id="GO:0042802">
    <property type="term" value="F:identical protein binding"/>
    <property type="evidence" value="ECO:0007669"/>
    <property type="project" value="Ensembl"/>
</dbReference>
<dbReference type="GO" id="GO:0003729">
    <property type="term" value="F:mRNA binding"/>
    <property type="evidence" value="ECO:0007669"/>
    <property type="project" value="InterPro"/>
</dbReference>
<dbReference type="GO" id="GO:0050733">
    <property type="term" value="F:RS domain binding"/>
    <property type="evidence" value="ECO:0000353"/>
    <property type="project" value="MGI"/>
</dbReference>
<dbReference type="GO" id="GO:0006376">
    <property type="term" value="P:mRNA splice site recognition"/>
    <property type="evidence" value="ECO:0007669"/>
    <property type="project" value="InterPro"/>
</dbReference>
<dbReference type="GO" id="GO:0045843">
    <property type="term" value="P:negative regulation of striated muscle tissue development"/>
    <property type="evidence" value="ECO:0000314"/>
    <property type="project" value="MGI"/>
</dbReference>
<dbReference type="InterPro" id="IPR004882">
    <property type="entry name" value="Luc7-rel"/>
</dbReference>
<dbReference type="PANTHER" id="PTHR12375">
    <property type="entry name" value="RNA-BINDING PROTEIN LUC7-RELATED"/>
    <property type="match status" value="1"/>
</dbReference>
<dbReference type="Pfam" id="PF03194">
    <property type="entry name" value="LUC7"/>
    <property type="match status" value="1"/>
</dbReference>